<gene>
    <name evidence="1" type="primary">glgC</name>
    <name type="ordered locus">Rru_A2246</name>
</gene>
<comment type="function">
    <text evidence="1">Involved in the biosynthesis of ADP-glucose, a building block required for the elongation reactions to produce glycogen. Catalyzes the reaction between ATP and alpha-D-glucose 1-phosphate (G1P) to produce pyrophosphate and ADP-Glc.</text>
</comment>
<comment type="catalytic activity">
    <reaction evidence="1">
        <text>alpha-D-glucose 1-phosphate + ATP + H(+) = ADP-alpha-D-glucose + diphosphate</text>
        <dbReference type="Rhea" id="RHEA:12120"/>
        <dbReference type="ChEBI" id="CHEBI:15378"/>
        <dbReference type="ChEBI" id="CHEBI:30616"/>
        <dbReference type="ChEBI" id="CHEBI:33019"/>
        <dbReference type="ChEBI" id="CHEBI:57498"/>
        <dbReference type="ChEBI" id="CHEBI:58601"/>
        <dbReference type="EC" id="2.7.7.27"/>
    </reaction>
</comment>
<comment type="pathway">
    <text evidence="1">Glycan biosynthesis; glycogen biosynthesis.</text>
</comment>
<comment type="subunit">
    <text evidence="1">Homotetramer.</text>
</comment>
<comment type="similarity">
    <text evidence="1">Belongs to the bacterial/plant glucose-1-phosphate adenylyltransferase family.</text>
</comment>
<proteinExistence type="inferred from homology"/>
<name>GLGC_RHORT</name>
<keyword id="KW-0067">ATP-binding</keyword>
<keyword id="KW-0119">Carbohydrate metabolism</keyword>
<keyword id="KW-0320">Glycogen biosynthesis</keyword>
<keyword id="KW-0321">Glycogen metabolism</keyword>
<keyword id="KW-0547">Nucleotide-binding</keyword>
<keyword id="KW-0548">Nucleotidyltransferase</keyword>
<keyword id="KW-1185">Reference proteome</keyword>
<keyword id="KW-0808">Transferase</keyword>
<feature type="chain" id="PRO_0000261894" description="Glucose-1-phosphate adenylyltransferase">
    <location>
        <begin position="1"/>
        <end position="423"/>
    </location>
</feature>
<feature type="binding site" evidence="1">
    <location>
        <position position="112"/>
    </location>
    <ligand>
        <name>alpha-D-glucose 1-phosphate</name>
        <dbReference type="ChEBI" id="CHEBI:58601"/>
    </ligand>
</feature>
<feature type="binding site" evidence="1">
    <location>
        <position position="177"/>
    </location>
    <ligand>
        <name>alpha-D-glucose 1-phosphate</name>
        <dbReference type="ChEBI" id="CHEBI:58601"/>
    </ligand>
</feature>
<feature type="binding site" evidence="1">
    <location>
        <begin position="192"/>
        <end position="193"/>
    </location>
    <ligand>
        <name>alpha-D-glucose 1-phosphate</name>
        <dbReference type="ChEBI" id="CHEBI:58601"/>
    </ligand>
</feature>
<feature type="binding site" evidence="1">
    <location>
        <position position="210"/>
    </location>
    <ligand>
        <name>alpha-D-glucose 1-phosphate</name>
        <dbReference type="ChEBI" id="CHEBI:58601"/>
    </ligand>
</feature>
<organism>
    <name type="scientific">Rhodospirillum rubrum (strain ATCC 11170 / ATH 1.1.1 / DSM 467 / LMG 4362 / NCIMB 8255 / S1)</name>
    <dbReference type="NCBI Taxonomy" id="269796"/>
    <lineage>
        <taxon>Bacteria</taxon>
        <taxon>Pseudomonadati</taxon>
        <taxon>Pseudomonadota</taxon>
        <taxon>Alphaproteobacteria</taxon>
        <taxon>Rhodospirillales</taxon>
        <taxon>Rhodospirillaceae</taxon>
        <taxon>Rhodospirillum</taxon>
    </lineage>
</organism>
<evidence type="ECO:0000255" key="1">
    <source>
        <dbReference type="HAMAP-Rule" id="MF_00624"/>
    </source>
</evidence>
<sequence length="423" mass="47376">MDQITEFQLDINRALKETLALVLAGGRGSRLRDLTNRESKPAVPFGGKYRIIDFPLSNCMNSGIRRMCVITQYRAHTLIHHIQRGWGFLRAEIGEFVELWPAQQQTDKESWYLGTADAVHQNLDLIRMHDPRFVLILAGDHIYKQDYSKLLAHHIARGSDCTVACVDVPREEATGYGCVEVDNDDNIVHFLEKPANPPGIPGRPDRAFASMGIYIFNADFLYEILESDALNEASQHDFGRDIIPSQVGKARIVAHRFSQSCVYSVGRREPYWRDVGTVDAYWSANIDLVSVTPALDLYDADWPIWTYQMQRPPAKFVFDTDERRGMAKDSLVSAGCIVSGGAVTGSLLFNDVRVNSYSSVIDTVILPMGDIGRHARLTKCILDTGCRIPEGLVIGEDPILDAKRFHVTEQGITLVTPDRLALL</sequence>
<protein>
    <recommendedName>
        <fullName evidence="1">Glucose-1-phosphate adenylyltransferase</fullName>
        <ecNumber evidence="1">2.7.7.27</ecNumber>
    </recommendedName>
    <alternativeName>
        <fullName evidence="1">ADP-glucose pyrophosphorylase</fullName>
        <shortName evidence="1">ADPGlc PPase</shortName>
    </alternativeName>
    <alternativeName>
        <fullName evidence="1">ADP-glucose synthase</fullName>
    </alternativeName>
</protein>
<reference key="1">
    <citation type="journal article" date="2011" name="Stand. Genomic Sci.">
        <title>Complete genome sequence of Rhodospirillum rubrum type strain (S1).</title>
        <authorList>
            <person name="Munk A.C."/>
            <person name="Copeland A."/>
            <person name="Lucas S."/>
            <person name="Lapidus A."/>
            <person name="Del Rio T.G."/>
            <person name="Barry K."/>
            <person name="Detter J.C."/>
            <person name="Hammon N."/>
            <person name="Israni S."/>
            <person name="Pitluck S."/>
            <person name="Brettin T."/>
            <person name="Bruce D."/>
            <person name="Han C."/>
            <person name="Tapia R."/>
            <person name="Gilna P."/>
            <person name="Schmutz J."/>
            <person name="Larimer F."/>
            <person name="Land M."/>
            <person name="Kyrpides N.C."/>
            <person name="Mavromatis K."/>
            <person name="Richardson P."/>
            <person name="Rohde M."/>
            <person name="Goeker M."/>
            <person name="Klenk H.P."/>
            <person name="Zhang Y."/>
            <person name="Roberts G.P."/>
            <person name="Reslewic S."/>
            <person name="Schwartz D.C."/>
        </authorList>
    </citation>
    <scope>NUCLEOTIDE SEQUENCE [LARGE SCALE GENOMIC DNA]</scope>
    <source>
        <strain>ATCC 11170 / ATH 1.1.1 / DSM 467 / LMG 4362 / NCIMB 8255 / S1</strain>
    </source>
</reference>
<dbReference type="EC" id="2.7.7.27" evidence="1"/>
<dbReference type="EMBL" id="CP000230">
    <property type="protein sequence ID" value="ABC23046.1"/>
    <property type="molecule type" value="Genomic_DNA"/>
</dbReference>
<dbReference type="RefSeq" id="WP_011389901.1">
    <property type="nucleotide sequence ID" value="NC_007643.1"/>
</dbReference>
<dbReference type="RefSeq" id="YP_427333.1">
    <property type="nucleotide sequence ID" value="NC_007643.1"/>
</dbReference>
<dbReference type="SMR" id="Q2RS49"/>
<dbReference type="STRING" id="269796.Rru_A2246"/>
<dbReference type="EnsemblBacteria" id="ABC23046">
    <property type="protein sequence ID" value="ABC23046"/>
    <property type="gene ID" value="Rru_A2246"/>
</dbReference>
<dbReference type="KEGG" id="rru:Rru_A2246"/>
<dbReference type="PATRIC" id="fig|269796.9.peg.2344"/>
<dbReference type="eggNOG" id="COG0448">
    <property type="taxonomic scope" value="Bacteria"/>
</dbReference>
<dbReference type="HOGENOM" id="CLU_029499_14_1_5"/>
<dbReference type="PhylomeDB" id="Q2RS49"/>
<dbReference type="UniPathway" id="UPA00164"/>
<dbReference type="Proteomes" id="UP000001929">
    <property type="component" value="Chromosome"/>
</dbReference>
<dbReference type="GO" id="GO:0005524">
    <property type="term" value="F:ATP binding"/>
    <property type="evidence" value="ECO:0007669"/>
    <property type="project" value="UniProtKB-KW"/>
</dbReference>
<dbReference type="GO" id="GO:0008878">
    <property type="term" value="F:glucose-1-phosphate adenylyltransferase activity"/>
    <property type="evidence" value="ECO:0007669"/>
    <property type="project" value="UniProtKB-UniRule"/>
</dbReference>
<dbReference type="GO" id="GO:0005978">
    <property type="term" value="P:glycogen biosynthetic process"/>
    <property type="evidence" value="ECO:0007669"/>
    <property type="project" value="UniProtKB-UniRule"/>
</dbReference>
<dbReference type="CDD" id="cd02508">
    <property type="entry name" value="ADP_Glucose_PP"/>
    <property type="match status" value="1"/>
</dbReference>
<dbReference type="CDD" id="cd04651">
    <property type="entry name" value="LbH_G1P_AT_C"/>
    <property type="match status" value="1"/>
</dbReference>
<dbReference type="Gene3D" id="2.160.10.10">
    <property type="entry name" value="Hexapeptide repeat proteins"/>
    <property type="match status" value="1"/>
</dbReference>
<dbReference type="Gene3D" id="3.90.550.10">
    <property type="entry name" value="Spore Coat Polysaccharide Biosynthesis Protein SpsA, Chain A"/>
    <property type="match status" value="1"/>
</dbReference>
<dbReference type="HAMAP" id="MF_00624">
    <property type="entry name" value="GlgC"/>
    <property type="match status" value="1"/>
</dbReference>
<dbReference type="InterPro" id="IPR011831">
    <property type="entry name" value="ADP-Glc_PPase"/>
</dbReference>
<dbReference type="InterPro" id="IPR005836">
    <property type="entry name" value="ADP_Glu_pyroP_CS"/>
</dbReference>
<dbReference type="InterPro" id="IPR023049">
    <property type="entry name" value="GlgC_bac"/>
</dbReference>
<dbReference type="InterPro" id="IPR056818">
    <property type="entry name" value="GlmU/GlgC-like_hexapep"/>
</dbReference>
<dbReference type="InterPro" id="IPR005835">
    <property type="entry name" value="NTP_transferase_dom"/>
</dbReference>
<dbReference type="InterPro" id="IPR029044">
    <property type="entry name" value="Nucleotide-diphossugar_trans"/>
</dbReference>
<dbReference type="InterPro" id="IPR011004">
    <property type="entry name" value="Trimer_LpxA-like_sf"/>
</dbReference>
<dbReference type="NCBIfam" id="TIGR02091">
    <property type="entry name" value="glgC"/>
    <property type="match status" value="1"/>
</dbReference>
<dbReference type="NCBIfam" id="NF001947">
    <property type="entry name" value="PRK00725.1"/>
    <property type="match status" value="1"/>
</dbReference>
<dbReference type="NCBIfam" id="NF002023">
    <property type="entry name" value="PRK00844.1"/>
    <property type="match status" value="1"/>
</dbReference>
<dbReference type="PANTHER" id="PTHR43523:SF2">
    <property type="entry name" value="GLUCOSE-1-PHOSPHATE ADENYLYLTRANSFERASE"/>
    <property type="match status" value="1"/>
</dbReference>
<dbReference type="PANTHER" id="PTHR43523">
    <property type="entry name" value="GLUCOSE-1-PHOSPHATE ADENYLYLTRANSFERASE-RELATED"/>
    <property type="match status" value="1"/>
</dbReference>
<dbReference type="Pfam" id="PF24894">
    <property type="entry name" value="Hexapep_GlmU"/>
    <property type="match status" value="1"/>
</dbReference>
<dbReference type="Pfam" id="PF00483">
    <property type="entry name" value="NTP_transferase"/>
    <property type="match status" value="1"/>
</dbReference>
<dbReference type="SUPFAM" id="SSF53448">
    <property type="entry name" value="Nucleotide-diphospho-sugar transferases"/>
    <property type="match status" value="1"/>
</dbReference>
<dbReference type="SUPFAM" id="SSF51161">
    <property type="entry name" value="Trimeric LpxA-like enzymes"/>
    <property type="match status" value="1"/>
</dbReference>
<dbReference type="PROSITE" id="PS00808">
    <property type="entry name" value="ADP_GLC_PYROPHOSPH_1"/>
    <property type="match status" value="1"/>
</dbReference>
<dbReference type="PROSITE" id="PS00809">
    <property type="entry name" value="ADP_GLC_PYROPHOSPH_2"/>
    <property type="match status" value="1"/>
</dbReference>
<dbReference type="PROSITE" id="PS00810">
    <property type="entry name" value="ADP_GLC_PYROPHOSPH_3"/>
    <property type="match status" value="1"/>
</dbReference>
<accession>Q2RS49</accession>